<accession>Q06239</accession>
<keyword id="KW-0010">Activator</keyword>
<keyword id="KW-0046">Antibiotic resistance</keyword>
<keyword id="KW-0961">Cell wall biogenesis/degradation</keyword>
<keyword id="KW-0963">Cytoplasm</keyword>
<keyword id="KW-0903">Direct protein sequencing</keyword>
<keyword id="KW-0238">DNA-binding</keyword>
<keyword id="KW-0597">Phosphoprotein</keyword>
<keyword id="KW-0614">Plasmid</keyword>
<keyword id="KW-0678">Repressor</keyword>
<keyword id="KW-0804">Transcription</keyword>
<keyword id="KW-0805">Transcription regulation</keyword>
<keyword id="KW-0902">Two-component regulatory system</keyword>
<reference key="1">
    <citation type="journal article" date="1993" name="J. Bacteriol.">
        <title>Characterization of Tn1546, a Tn3-related transposon conferring glycopeptide resistance by synthesis of depsipeptide peptidoglycan precursors in Enterococcus faecium BM4147.</title>
        <authorList>
            <person name="Arthur M."/>
            <person name="Molinas C."/>
            <person name="Depardieu F."/>
            <person name="Courvalin P."/>
        </authorList>
    </citation>
    <scope>NUCLEOTIDE SEQUENCE [GENOMIC DNA]</scope>
    <source>
        <strain>BM4147</strain>
        <plasmid>pIP816</plasmid>
        <transposon>Tn1546</transposon>
    </source>
</reference>
<reference key="2">
    <citation type="journal article" date="1992" name="J. Bacteriol.">
        <title>The VanS-VanR two-component regulatory system controls synthesis of depsipeptide peptidoglycan precursors in Enterococcus faecium BM4147.</title>
        <authorList>
            <person name="Arthur M."/>
            <person name="Molinas C."/>
            <person name="Courvalin P."/>
        </authorList>
    </citation>
    <scope>NUCLEOTIDE SEQUENCE [GENOMIC DNA]</scope>
    <scope>FUNCTION</scope>
    <source>
        <strain>BM4147</strain>
        <plasmid>pIP816</plasmid>
    </source>
</reference>
<reference key="3">
    <citation type="journal article" date="1992" name="FEMS Microbiol. Lett.">
        <title>Insertional inactivation of a gene which controls expression of vancomycin resistance on plasmid pHKK100.</title>
        <authorList>
            <person name="Handwerger S."/>
            <person name="Discotto L."/>
            <person name="Thanassi J."/>
            <person name="Pucci M.J."/>
        </authorList>
    </citation>
    <scope>NUCLEOTIDE SEQUENCE [GENOMIC DNA]</scope>
    <scope>FUNCTION</scope>
    <source>
        <strain>221</strain>
        <plasmid>pHKK100</plasmid>
    </source>
</reference>
<reference evidence="8" key="4">
    <citation type="journal article" date="1993" name="Biochemistry">
        <title>Purification and characterization of VanR and the cytosolic domain of VanS: a two-component regulatory system required for vancomycin resistance in Enterococcus faecium BM4147.</title>
        <authorList>
            <person name="Wright G.D."/>
            <person name="Holman T.R."/>
            <person name="Walsh C.T."/>
        </authorList>
    </citation>
    <scope>PROTEIN SEQUENCE OF 1-6</scope>
    <scope>FUNCTION</scope>
    <scope>SUBUNIT</scope>
    <scope>PHOSPHORYLATION</scope>
</reference>
<reference evidence="8" key="5">
    <citation type="journal article" date="1994" name="Biochemistry">
        <title>Identification of the DNA-binding site for the phosphorylated VanR protein required for vancomycin resistance in Enterococcus faecium.</title>
        <authorList>
            <person name="Holman T.R."/>
            <person name="Wu Z."/>
            <person name="Wanner B.L."/>
            <person name="Walsh C.T."/>
        </authorList>
    </citation>
    <scope>FUNCTION</scope>
    <scope>PHOSPHORYLATION</scope>
    <scope>MUTAGENESIS OF ASP-53</scope>
</reference>
<reference evidence="8" key="6">
    <citation type="journal article" date="1996" name="Biochemistry">
        <title>Kinetic comparison of the specificity of the vancomycin resistance VanS for two response regulators, VanR and PhoB.</title>
        <authorList>
            <person name="Fisher S.L."/>
            <person name="Kim S.K."/>
            <person name="Wanner B.L."/>
            <person name="Walsh C.T."/>
        </authorList>
    </citation>
    <scope>FUNCTION</scope>
</reference>
<organism>
    <name type="scientific">Enterococcus faecium</name>
    <name type="common">Streptococcus faecium</name>
    <dbReference type="NCBI Taxonomy" id="1352"/>
    <lineage>
        <taxon>Bacteria</taxon>
        <taxon>Bacillati</taxon>
        <taxon>Bacillota</taxon>
        <taxon>Bacilli</taxon>
        <taxon>Lactobacillales</taxon>
        <taxon>Enterococcaceae</taxon>
        <taxon>Enterococcus</taxon>
    </lineage>
</organism>
<evidence type="ECO:0000255" key="1">
    <source>
        <dbReference type="PROSITE-ProRule" id="PRU00169"/>
    </source>
</evidence>
<evidence type="ECO:0000255" key="2">
    <source>
        <dbReference type="PROSITE-ProRule" id="PRU01091"/>
    </source>
</evidence>
<evidence type="ECO:0000269" key="3">
    <source>
    </source>
</evidence>
<evidence type="ECO:0000269" key="4">
    <source>
    </source>
</evidence>
<evidence type="ECO:0000269" key="5">
    <source>
    </source>
</evidence>
<evidence type="ECO:0000269" key="6">
    <source>
    </source>
</evidence>
<evidence type="ECO:0000269" key="7">
    <source>
    </source>
</evidence>
<evidence type="ECO:0000305" key="8"/>
<feature type="chain" id="PRO_0000081263" description="Regulatory protein VanR">
    <location>
        <begin position="1"/>
        <end position="231"/>
    </location>
</feature>
<feature type="domain" description="Response regulatory" evidence="1">
    <location>
        <begin position="4"/>
        <end position="117"/>
    </location>
</feature>
<feature type="DNA-binding region" description="OmpR/PhoB-type" evidence="2">
    <location>
        <begin position="131"/>
        <end position="231"/>
    </location>
</feature>
<feature type="modified residue" description="4-aspartylphosphate" evidence="1">
    <location>
        <position position="53"/>
    </location>
</feature>
<feature type="mutagenesis site" description="Abolishes phosphorylation by histidine kinase VanS or by acetyl phosphate." evidence="5">
    <original>D</original>
    <variation>A</variation>
    <location>
        <position position="53"/>
    </location>
</feature>
<protein>
    <recommendedName>
        <fullName>Regulatory protein VanR</fullName>
        <shortName evidence="8">VanR</shortName>
        <shortName evidence="8">VanRA</shortName>
    </recommendedName>
    <alternativeName>
        <fullName evidence="8">Regulatory protein VanRA</fullName>
    </alternativeName>
</protein>
<geneLocation type="plasmid">
    <name>pIP816</name>
</geneLocation>
<geneLocation type="plasmid">
    <name>pHKK100</name>
</geneLocation>
<dbReference type="EMBL" id="M97297">
    <property type="protein sequence ID" value="AAA65953.1"/>
    <property type="molecule type" value="Genomic_DNA"/>
</dbReference>
<dbReference type="EMBL" id="M68910">
    <property type="protein sequence ID" value="AAA24787.1"/>
    <property type="molecule type" value="Genomic_DNA"/>
</dbReference>
<dbReference type="EMBL" id="M84146">
    <property type="protein sequence ID" value="AAA24790.1"/>
    <property type="molecule type" value="Genomic_DNA"/>
</dbReference>
<dbReference type="PIR" id="A41838">
    <property type="entry name" value="A41838"/>
</dbReference>
<dbReference type="RefSeq" id="YP_001019038.1">
    <property type="nucleotide sequence ID" value="NC_008821.1"/>
</dbReference>
<dbReference type="RefSeq" id="YP_001974799.1">
    <property type="nucleotide sequence ID" value="NC_010980.1"/>
</dbReference>
<dbReference type="RefSeq" id="YP_002128396.1">
    <property type="nucleotide sequence ID" value="NC_011140.1"/>
</dbReference>
<dbReference type="RefSeq" id="YP_004172619.1">
    <property type="nucleotide sequence ID" value="NC_014959.1"/>
</dbReference>
<dbReference type="RefSeq" id="YP_006937552.1">
    <property type="nucleotide sequence ID" value="NC_013317.1"/>
</dbReference>
<dbReference type="RefSeq" id="YP_976080.1">
    <property type="nucleotide sequence ID" value="NC_008768.1"/>
</dbReference>
<dbReference type="SMR" id="Q06239"/>
<dbReference type="CARD" id="ARO:3002919">
    <property type="molecule name" value="vanR_in_vanA_cl"/>
    <property type="mechanism identifier" value="ARO:0001001"/>
    <property type="mechanism name" value="antibiotic target alteration"/>
</dbReference>
<dbReference type="GO" id="GO:0005829">
    <property type="term" value="C:cytosol"/>
    <property type="evidence" value="ECO:0007669"/>
    <property type="project" value="TreeGrafter"/>
</dbReference>
<dbReference type="GO" id="GO:0032993">
    <property type="term" value="C:protein-DNA complex"/>
    <property type="evidence" value="ECO:0007669"/>
    <property type="project" value="TreeGrafter"/>
</dbReference>
<dbReference type="GO" id="GO:0000156">
    <property type="term" value="F:phosphorelay response regulator activity"/>
    <property type="evidence" value="ECO:0007669"/>
    <property type="project" value="TreeGrafter"/>
</dbReference>
<dbReference type="GO" id="GO:0000976">
    <property type="term" value="F:transcription cis-regulatory region binding"/>
    <property type="evidence" value="ECO:0007669"/>
    <property type="project" value="TreeGrafter"/>
</dbReference>
<dbReference type="GO" id="GO:0071555">
    <property type="term" value="P:cell wall organization"/>
    <property type="evidence" value="ECO:0007669"/>
    <property type="project" value="UniProtKB-KW"/>
</dbReference>
<dbReference type="GO" id="GO:0043433">
    <property type="term" value="P:negative regulation of DNA-binding transcription factor activity"/>
    <property type="evidence" value="ECO:0000316"/>
    <property type="project" value="CACAO"/>
</dbReference>
<dbReference type="GO" id="GO:0046677">
    <property type="term" value="P:response to antibiotic"/>
    <property type="evidence" value="ECO:0007669"/>
    <property type="project" value="UniProtKB-KW"/>
</dbReference>
<dbReference type="CDD" id="cd17574">
    <property type="entry name" value="REC_OmpR"/>
    <property type="match status" value="1"/>
</dbReference>
<dbReference type="CDD" id="cd00383">
    <property type="entry name" value="trans_reg_C"/>
    <property type="match status" value="1"/>
</dbReference>
<dbReference type="FunFam" id="3.40.50.2300:FF:000001">
    <property type="entry name" value="DNA-binding response regulator PhoB"/>
    <property type="match status" value="1"/>
</dbReference>
<dbReference type="FunFam" id="1.10.10.10:FF:000018">
    <property type="entry name" value="DNA-binding response regulator ResD"/>
    <property type="match status" value="1"/>
</dbReference>
<dbReference type="Gene3D" id="3.40.50.2300">
    <property type="match status" value="1"/>
</dbReference>
<dbReference type="Gene3D" id="6.10.250.690">
    <property type="match status" value="1"/>
</dbReference>
<dbReference type="Gene3D" id="1.10.10.10">
    <property type="entry name" value="Winged helix-like DNA-binding domain superfamily/Winged helix DNA-binding domain"/>
    <property type="match status" value="1"/>
</dbReference>
<dbReference type="InterPro" id="IPR011006">
    <property type="entry name" value="CheY-like_superfamily"/>
</dbReference>
<dbReference type="InterPro" id="IPR001867">
    <property type="entry name" value="OmpR/PhoB-type_DNA-bd"/>
</dbReference>
<dbReference type="InterPro" id="IPR016032">
    <property type="entry name" value="Sig_transdc_resp-reg_C-effctor"/>
</dbReference>
<dbReference type="InterPro" id="IPR001789">
    <property type="entry name" value="Sig_transdc_resp-reg_receiver"/>
</dbReference>
<dbReference type="InterPro" id="IPR039420">
    <property type="entry name" value="WalR-like"/>
</dbReference>
<dbReference type="InterPro" id="IPR036388">
    <property type="entry name" value="WH-like_DNA-bd_sf"/>
</dbReference>
<dbReference type="NCBIfam" id="NF000401">
    <property type="entry name" value="vanR-A"/>
    <property type="match status" value="1"/>
</dbReference>
<dbReference type="NCBIfam" id="NF033117">
    <property type="entry name" value="vanR_ACDEGLN"/>
    <property type="match status" value="1"/>
</dbReference>
<dbReference type="PANTHER" id="PTHR48111">
    <property type="entry name" value="REGULATOR OF RPOS"/>
    <property type="match status" value="1"/>
</dbReference>
<dbReference type="PANTHER" id="PTHR48111:SF2">
    <property type="entry name" value="RESPONSE REGULATOR SAER"/>
    <property type="match status" value="1"/>
</dbReference>
<dbReference type="Pfam" id="PF00072">
    <property type="entry name" value="Response_reg"/>
    <property type="match status" value="1"/>
</dbReference>
<dbReference type="Pfam" id="PF00486">
    <property type="entry name" value="Trans_reg_C"/>
    <property type="match status" value="1"/>
</dbReference>
<dbReference type="SMART" id="SM00448">
    <property type="entry name" value="REC"/>
    <property type="match status" value="1"/>
</dbReference>
<dbReference type="SMART" id="SM00862">
    <property type="entry name" value="Trans_reg_C"/>
    <property type="match status" value="1"/>
</dbReference>
<dbReference type="SUPFAM" id="SSF46894">
    <property type="entry name" value="C-terminal effector domain of the bipartite response regulators"/>
    <property type="match status" value="1"/>
</dbReference>
<dbReference type="SUPFAM" id="SSF52172">
    <property type="entry name" value="CheY-like"/>
    <property type="match status" value="1"/>
</dbReference>
<dbReference type="PROSITE" id="PS51755">
    <property type="entry name" value="OMPR_PHOB"/>
    <property type="match status" value="1"/>
</dbReference>
<dbReference type="PROSITE" id="PS50110">
    <property type="entry name" value="RESPONSE_REGULATORY"/>
    <property type="match status" value="1"/>
</dbReference>
<comment type="function">
    <text evidence="3 4 5 6 7">Member of the two-component regulatory system VanS/VanR (PubMed:1556077). Binds to the promoter regions of target genes, including vanH and vanR; phosphorylation of VanR increases binding affinity to the vanH and vanR promoters significantly (PubMed:8161518, PubMed:8494882, PubMed:8664263). DNA binding may be inhibited by the cognate sensor protein, VanS (PubMed:8161518). Activates the transcription of vanH, vanA and vanX in response to vancomycin which results in vancomycin resistance (PubMed:1556077). Involved in conferring vancomycin resistance (PubMed:1320585).</text>
</comment>
<comment type="subunit">
    <text evidence="6">Monomer.</text>
</comment>
<comment type="subcellular location">
    <subcellularLocation>
        <location evidence="8">Cytoplasm</location>
    </subcellularLocation>
</comment>
<comment type="PTM">
    <text evidence="5 6">Phosphorylated by VanS (PubMed:8494882). Dephosphorylated by VanS (PubMed:8494882). Can be phosphorylated nonenzymatically by acetyl-phosphate (PubMed:8161518).</text>
</comment>
<gene>
    <name type="primary">vanR</name>
    <name evidence="8" type="synonym">vanRA</name>
</gene>
<proteinExistence type="evidence at protein level"/>
<sequence>MSDKILIVDDEHEIADLVELYLKNENYTVFKYYTAKEALECIDKSEIDLAILDIMLPGTSGLTICQKIRDKHTYPIIMLTGKDTEVDKITGLTIGADDYITKPFRPLELIARVKAQLRRYKKFSGVKEQNENVIVHSGLVINVNTHECYLNEKQLSLTPTEFSILRILCENKGNVVSSELLFHEIWGDEYFSKSNNTITVHIRHLREKMNDTIDNPKYIKTVWGVGYKIEK</sequence>
<name>VANR_ENTFC</name>